<feature type="chain" id="PRO_0000235521" description="Aspartate--tRNA(Asp/Asn) ligase">
    <location>
        <begin position="1"/>
        <end position="600"/>
    </location>
</feature>
<feature type="region of interest" description="Aspartate" evidence="1">
    <location>
        <begin position="199"/>
        <end position="202"/>
    </location>
</feature>
<feature type="region of interest" description="Disordered" evidence="2">
    <location>
        <begin position="578"/>
        <end position="600"/>
    </location>
</feature>
<feature type="compositionally biased region" description="Basic and acidic residues" evidence="2">
    <location>
        <begin position="580"/>
        <end position="590"/>
    </location>
</feature>
<feature type="binding site" evidence="1">
    <location>
        <position position="175"/>
    </location>
    <ligand>
        <name>L-aspartate</name>
        <dbReference type="ChEBI" id="CHEBI:29991"/>
    </ligand>
</feature>
<feature type="binding site" evidence="1">
    <location>
        <begin position="221"/>
        <end position="223"/>
    </location>
    <ligand>
        <name>ATP</name>
        <dbReference type="ChEBI" id="CHEBI:30616"/>
    </ligand>
</feature>
<feature type="binding site" evidence="1">
    <location>
        <position position="221"/>
    </location>
    <ligand>
        <name>L-aspartate</name>
        <dbReference type="ChEBI" id="CHEBI:29991"/>
    </ligand>
</feature>
<feature type="binding site" evidence="1">
    <location>
        <position position="230"/>
    </location>
    <ligand>
        <name>ATP</name>
        <dbReference type="ChEBI" id="CHEBI:30616"/>
    </ligand>
</feature>
<feature type="binding site" evidence="1">
    <location>
        <position position="453"/>
    </location>
    <ligand>
        <name>L-aspartate</name>
        <dbReference type="ChEBI" id="CHEBI:29991"/>
    </ligand>
</feature>
<feature type="binding site" evidence="1">
    <location>
        <position position="487"/>
    </location>
    <ligand>
        <name>ATP</name>
        <dbReference type="ChEBI" id="CHEBI:30616"/>
    </ligand>
</feature>
<feature type="binding site" evidence="1">
    <location>
        <position position="494"/>
    </location>
    <ligand>
        <name>L-aspartate</name>
        <dbReference type="ChEBI" id="CHEBI:29991"/>
    </ligand>
</feature>
<feature type="binding site" evidence="1">
    <location>
        <begin position="539"/>
        <end position="542"/>
    </location>
    <ligand>
        <name>ATP</name>
        <dbReference type="ChEBI" id="CHEBI:30616"/>
    </ligand>
</feature>
<feature type="site" description="Important for tRNA non-discrimination" evidence="1">
    <location>
        <position position="31"/>
    </location>
</feature>
<feature type="site" description="Important for tRNA non-discrimination" evidence="1">
    <location>
        <position position="80"/>
    </location>
</feature>
<organism>
    <name type="scientific">Corynebacterium jeikeium (strain K411)</name>
    <dbReference type="NCBI Taxonomy" id="306537"/>
    <lineage>
        <taxon>Bacteria</taxon>
        <taxon>Bacillati</taxon>
        <taxon>Actinomycetota</taxon>
        <taxon>Actinomycetes</taxon>
        <taxon>Mycobacteriales</taxon>
        <taxon>Corynebacteriaceae</taxon>
        <taxon>Corynebacterium</taxon>
    </lineage>
</organism>
<comment type="function">
    <text evidence="1">Aspartyl-tRNA synthetase with relaxed tRNA specificity since it is able to aspartylate not only its cognate tRNA(Asp) but also tRNA(Asn). Reaction proceeds in two steps: L-aspartate is first activated by ATP to form Asp-AMP and then transferred to the acceptor end of tRNA(Asp/Asn).</text>
</comment>
<comment type="catalytic activity">
    <reaction evidence="1">
        <text>tRNA(Asx) + L-aspartate + ATP = L-aspartyl-tRNA(Asx) + AMP + diphosphate</text>
        <dbReference type="Rhea" id="RHEA:18349"/>
        <dbReference type="Rhea" id="RHEA-COMP:9710"/>
        <dbReference type="Rhea" id="RHEA-COMP:9711"/>
        <dbReference type="ChEBI" id="CHEBI:29991"/>
        <dbReference type="ChEBI" id="CHEBI:30616"/>
        <dbReference type="ChEBI" id="CHEBI:33019"/>
        <dbReference type="ChEBI" id="CHEBI:78442"/>
        <dbReference type="ChEBI" id="CHEBI:78516"/>
        <dbReference type="ChEBI" id="CHEBI:456215"/>
        <dbReference type="EC" id="6.1.1.23"/>
    </reaction>
</comment>
<comment type="subunit">
    <text evidence="1">Homodimer.</text>
</comment>
<comment type="subcellular location">
    <subcellularLocation>
        <location evidence="1">Cytoplasm</location>
    </subcellularLocation>
</comment>
<comment type="similarity">
    <text evidence="1">Belongs to the class-II aminoacyl-tRNA synthetase family. Type 1 subfamily.</text>
</comment>
<protein>
    <recommendedName>
        <fullName evidence="1">Aspartate--tRNA(Asp/Asn) ligase</fullName>
        <ecNumber evidence="1">6.1.1.23</ecNumber>
    </recommendedName>
    <alternativeName>
        <fullName evidence="1">Aspartyl-tRNA synthetase</fullName>
        <shortName evidence="1">AspRS</shortName>
    </alternativeName>
    <alternativeName>
        <fullName evidence="1">Non-discriminating aspartyl-tRNA synthetase</fullName>
        <shortName evidence="1">ND-AspRS</shortName>
    </alternativeName>
</protein>
<sequence>MLRTHLAGELRPDNIGDEVTLTGWVGRRRDHGGVIFIDLRDRSGVAQVVFRESEVAERAHDLRSEYCLKVTGVVEARPEGSENPNLASGGIEVNVSALEVLNEAAALPFQIDDPSTSGEVGEETRLKYRYLDLRRKTQGDALRLRSRVNQAARGVLAEHDFTEIETPTLTRSTPEGARDFLVPARLRPGTFYALPQSPQLFKQLLMVAGMERYYQIARCYRDEDFRADRQPEFTQLDVEMSFVDQEDVISLAEEILVAIWKEIGYEISTPIPRMTYADAMKYYGSDKPDLRFDIQITECTDFFKNTTFRVFQNEYVGAVVMEGGADQPRRQLDAWQEWAKQRGAKGLAYILVGEDGELSGPVAKNITDEERAGIAEHVGAKPGDCIFFAAGETKPSRALLGAARGEIANKLGLIKEGDWAFTWVVDAPLFEPAADATASGDVALGHSAWTAVHHAFTSPKPEYLDNFDENPGEALAYAYDIVCNGNEIGGGSIRIHQPDVQERVFKVMGITEEEAREKFGFLLDAFAFGAPPHGGIAFGWDRIVSLLGGFDSIRDVIAFPKSGGGVDPLTDAPGEISAAQRKESGIDFKPKKGPQGQKEK</sequence>
<gene>
    <name evidence="1" type="primary">aspS</name>
    <name type="ordered locus">jk1041</name>
</gene>
<accession>Q4JVF2</accession>
<dbReference type="EC" id="6.1.1.23" evidence="1"/>
<dbReference type="EMBL" id="CR931997">
    <property type="protein sequence ID" value="CAI37205.1"/>
    <property type="molecule type" value="Genomic_DNA"/>
</dbReference>
<dbReference type="RefSeq" id="WP_011273608.1">
    <property type="nucleotide sequence ID" value="NC_007164.1"/>
</dbReference>
<dbReference type="SMR" id="Q4JVF2"/>
<dbReference type="STRING" id="306537.jk1041"/>
<dbReference type="KEGG" id="cjk:jk1041"/>
<dbReference type="PATRIC" id="fig|306537.10.peg.1052"/>
<dbReference type="eggNOG" id="COG0173">
    <property type="taxonomic scope" value="Bacteria"/>
</dbReference>
<dbReference type="HOGENOM" id="CLU_014330_3_2_11"/>
<dbReference type="OrthoDB" id="9802326at2"/>
<dbReference type="Proteomes" id="UP000000545">
    <property type="component" value="Chromosome"/>
</dbReference>
<dbReference type="GO" id="GO:0005737">
    <property type="term" value="C:cytoplasm"/>
    <property type="evidence" value="ECO:0007669"/>
    <property type="project" value="UniProtKB-SubCell"/>
</dbReference>
<dbReference type="GO" id="GO:0004815">
    <property type="term" value="F:aspartate-tRNA ligase activity"/>
    <property type="evidence" value="ECO:0007669"/>
    <property type="project" value="UniProtKB-UniRule"/>
</dbReference>
<dbReference type="GO" id="GO:0050560">
    <property type="term" value="F:aspartate-tRNA(Asn) ligase activity"/>
    <property type="evidence" value="ECO:0007669"/>
    <property type="project" value="UniProtKB-EC"/>
</dbReference>
<dbReference type="GO" id="GO:0005524">
    <property type="term" value="F:ATP binding"/>
    <property type="evidence" value="ECO:0007669"/>
    <property type="project" value="UniProtKB-UniRule"/>
</dbReference>
<dbReference type="GO" id="GO:0003676">
    <property type="term" value="F:nucleic acid binding"/>
    <property type="evidence" value="ECO:0007669"/>
    <property type="project" value="InterPro"/>
</dbReference>
<dbReference type="GO" id="GO:0006422">
    <property type="term" value="P:aspartyl-tRNA aminoacylation"/>
    <property type="evidence" value="ECO:0007669"/>
    <property type="project" value="UniProtKB-UniRule"/>
</dbReference>
<dbReference type="CDD" id="cd00777">
    <property type="entry name" value="AspRS_core"/>
    <property type="match status" value="1"/>
</dbReference>
<dbReference type="CDD" id="cd04317">
    <property type="entry name" value="EcAspRS_like_N"/>
    <property type="match status" value="1"/>
</dbReference>
<dbReference type="Gene3D" id="3.30.930.10">
    <property type="entry name" value="Bira Bifunctional Protein, Domain 2"/>
    <property type="match status" value="1"/>
</dbReference>
<dbReference type="Gene3D" id="3.30.1360.30">
    <property type="entry name" value="GAD-like domain"/>
    <property type="match status" value="1"/>
</dbReference>
<dbReference type="Gene3D" id="2.40.50.140">
    <property type="entry name" value="Nucleic acid-binding proteins"/>
    <property type="match status" value="1"/>
</dbReference>
<dbReference type="HAMAP" id="MF_00044">
    <property type="entry name" value="Asp_tRNA_synth_type1"/>
    <property type="match status" value="1"/>
</dbReference>
<dbReference type="InterPro" id="IPR004364">
    <property type="entry name" value="Aa-tRNA-synt_II"/>
</dbReference>
<dbReference type="InterPro" id="IPR006195">
    <property type="entry name" value="aa-tRNA-synth_II"/>
</dbReference>
<dbReference type="InterPro" id="IPR045864">
    <property type="entry name" value="aa-tRNA-synth_II/BPL/LPL"/>
</dbReference>
<dbReference type="InterPro" id="IPR004524">
    <property type="entry name" value="Asp-tRNA-ligase_1"/>
</dbReference>
<dbReference type="InterPro" id="IPR047089">
    <property type="entry name" value="Asp-tRNA-ligase_1_N"/>
</dbReference>
<dbReference type="InterPro" id="IPR002312">
    <property type="entry name" value="Asp/Asn-tRNA-synth_IIb"/>
</dbReference>
<dbReference type="InterPro" id="IPR047090">
    <property type="entry name" value="AspRS_core"/>
</dbReference>
<dbReference type="InterPro" id="IPR004115">
    <property type="entry name" value="GAD-like_sf"/>
</dbReference>
<dbReference type="InterPro" id="IPR029351">
    <property type="entry name" value="GAD_dom"/>
</dbReference>
<dbReference type="InterPro" id="IPR012340">
    <property type="entry name" value="NA-bd_OB-fold"/>
</dbReference>
<dbReference type="InterPro" id="IPR004365">
    <property type="entry name" value="NA-bd_OB_tRNA"/>
</dbReference>
<dbReference type="NCBIfam" id="TIGR00459">
    <property type="entry name" value="aspS_bact"/>
    <property type="match status" value="1"/>
</dbReference>
<dbReference type="NCBIfam" id="NF001750">
    <property type="entry name" value="PRK00476.1"/>
    <property type="match status" value="1"/>
</dbReference>
<dbReference type="PANTHER" id="PTHR22594:SF5">
    <property type="entry name" value="ASPARTATE--TRNA LIGASE, MITOCHONDRIAL"/>
    <property type="match status" value="1"/>
</dbReference>
<dbReference type="PANTHER" id="PTHR22594">
    <property type="entry name" value="ASPARTYL/LYSYL-TRNA SYNTHETASE"/>
    <property type="match status" value="1"/>
</dbReference>
<dbReference type="Pfam" id="PF02938">
    <property type="entry name" value="GAD"/>
    <property type="match status" value="1"/>
</dbReference>
<dbReference type="Pfam" id="PF00152">
    <property type="entry name" value="tRNA-synt_2"/>
    <property type="match status" value="1"/>
</dbReference>
<dbReference type="Pfam" id="PF01336">
    <property type="entry name" value="tRNA_anti-codon"/>
    <property type="match status" value="1"/>
</dbReference>
<dbReference type="PRINTS" id="PR01042">
    <property type="entry name" value="TRNASYNTHASP"/>
</dbReference>
<dbReference type="SUPFAM" id="SSF55681">
    <property type="entry name" value="Class II aaRS and biotin synthetases"/>
    <property type="match status" value="1"/>
</dbReference>
<dbReference type="SUPFAM" id="SSF55261">
    <property type="entry name" value="GAD domain-like"/>
    <property type="match status" value="1"/>
</dbReference>
<dbReference type="SUPFAM" id="SSF50249">
    <property type="entry name" value="Nucleic acid-binding proteins"/>
    <property type="match status" value="1"/>
</dbReference>
<dbReference type="PROSITE" id="PS50862">
    <property type="entry name" value="AA_TRNA_LIGASE_II"/>
    <property type="match status" value="1"/>
</dbReference>
<name>SYDND_CORJK</name>
<keyword id="KW-0030">Aminoacyl-tRNA synthetase</keyword>
<keyword id="KW-0067">ATP-binding</keyword>
<keyword id="KW-0963">Cytoplasm</keyword>
<keyword id="KW-0436">Ligase</keyword>
<keyword id="KW-0547">Nucleotide-binding</keyword>
<keyword id="KW-0648">Protein biosynthesis</keyword>
<keyword id="KW-1185">Reference proteome</keyword>
<proteinExistence type="inferred from homology"/>
<evidence type="ECO:0000255" key="1">
    <source>
        <dbReference type="HAMAP-Rule" id="MF_00044"/>
    </source>
</evidence>
<evidence type="ECO:0000256" key="2">
    <source>
        <dbReference type="SAM" id="MobiDB-lite"/>
    </source>
</evidence>
<reference key="1">
    <citation type="journal article" date="2005" name="J. Bacteriol.">
        <title>Complete genome sequence and analysis of the multiresistant nosocomial pathogen Corynebacterium jeikeium K411, a lipid-requiring bacterium of the human skin flora.</title>
        <authorList>
            <person name="Tauch A."/>
            <person name="Kaiser O."/>
            <person name="Hain T."/>
            <person name="Goesmann A."/>
            <person name="Weisshaar B."/>
            <person name="Albersmeier A."/>
            <person name="Bekel T."/>
            <person name="Bischoff N."/>
            <person name="Brune I."/>
            <person name="Chakraborty T."/>
            <person name="Kalinowski J."/>
            <person name="Meyer F."/>
            <person name="Rupp O."/>
            <person name="Schneiker S."/>
            <person name="Viehoever P."/>
            <person name="Puehler A."/>
        </authorList>
    </citation>
    <scope>NUCLEOTIDE SEQUENCE [LARGE SCALE GENOMIC DNA]</scope>
    <source>
        <strain>K411</strain>
    </source>
</reference>